<feature type="chain" id="PRO_1000025408" description="Co-chaperonin GroES">
    <location>
        <begin position="1"/>
        <end position="97"/>
    </location>
</feature>
<protein>
    <recommendedName>
        <fullName evidence="1">Co-chaperonin GroES</fullName>
    </recommendedName>
    <alternativeName>
        <fullName evidence="1">10 kDa chaperonin</fullName>
    </alternativeName>
    <alternativeName>
        <fullName evidence="1">Chaperonin-10</fullName>
        <shortName evidence="1">Cpn10</shortName>
    </alternativeName>
</protein>
<reference key="1">
    <citation type="journal article" date="2006" name="J. Bacteriol.">
        <title>Complete genome sequence of Yersinia pestis strains Antiqua and Nepal516: evidence of gene reduction in an emerging pathogen.</title>
        <authorList>
            <person name="Chain P.S.G."/>
            <person name="Hu P."/>
            <person name="Malfatti S.A."/>
            <person name="Radnedge L."/>
            <person name="Larimer F."/>
            <person name="Vergez L.M."/>
            <person name="Worsham P."/>
            <person name="Chu M.C."/>
            <person name="Andersen G.L."/>
        </authorList>
    </citation>
    <scope>NUCLEOTIDE SEQUENCE [LARGE SCALE GENOMIC DNA]</scope>
    <source>
        <strain>Nepal516</strain>
    </source>
</reference>
<reference key="2">
    <citation type="submission" date="2009-04" db="EMBL/GenBank/DDBJ databases">
        <title>Yersinia pestis Nepal516A whole genome shotgun sequencing project.</title>
        <authorList>
            <person name="Plunkett G. III"/>
            <person name="Anderson B.D."/>
            <person name="Baumler D.J."/>
            <person name="Burland V."/>
            <person name="Cabot E.L."/>
            <person name="Glasner J.D."/>
            <person name="Mau B."/>
            <person name="Neeno-Eckwall E."/>
            <person name="Perna N.T."/>
            <person name="Munk A.C."/>
            <person name="Tapia R."/>
            <person name="Green L.D."/>
            <person name="Rogers Y.C."/>
            <person name="Detter J.C."/>
            <person name="Bruce D.C."/>
            <person name="Brettin T.S."/>
        </authorList>
    </citation>
    <scope>NUCLEOTIDE SEQUENCE [LARGE SCALE GENOMIC DNA]</scope>
    <source>
        <strain>Nepal516</strain>
    </source>
</reference>
<comment type="function">
    <text evidence="1">Together with the chaperonin GroEL, plays an essential role in assisting protein folding. The GroEL-GroES system forms a nano-cage that allows encapsulation of the non-native substrate proteins and provides a physical environment optimized to promote and accelerate protein folding. GroES binds to the apical surface of the GroEL ring, thereby capping the opening of the GroEL channel.</text>
</comment>
<comment type="subunit">
    <text evidence="1">Heptamer of 7 subunits arranged in a ring. Interacts with the chaperonin GroEL.</text>
</comment>
<comment type="subcellular location">
    <subcellularLocation>
        <location evidence="1">Cytoplasm</location>
    </subcellularLocation>
</comment>
<comment type="similarity">
    <text evidence="1">Belongs to the GroES chaperonin family.</text>
</comment>
<dbReference type="EMBL" id="CP000305">
    <property type="protein sequence ID" value="ABG19647.1"/>
    <property type="molecule type" value="Genomic_DNA"/>
</dbReference>
<dbReference type="EMBL" id="ACNQ01000017">
    <property type="protein sequence ID" value="EEO75835.1"/>
    <property type="molecule type" value="Genomic_DNA"/>
</dbReference>
<dbReference type="RefSeq" id="WP_002209127.1">
    <property type="nucleotide sequence ID" value="NZ_ACNQ01000017.1"/>
</dbReference>
<dbReference type="SMR" id="Q1CED3"/>
<dbReference type="KEGG" id="ypn:YPN_3320"/>
<dbReference type="HOGENOM" id="CLU_132825_1_1_6"/>
<dbReference type="Proteomes" id="UP000008936">
    <property type="component" value="Chromosome"/>
</dbReference>
<dbReference type="GO" id="GO:0005737">
    <property type="term" value="C:cytoplasm"/>
    <property type="evidence" value="ECO:0007669"/>
    <property type="project" value="UniProtKB-SubCell"/>
</dbReference>
<dbReference type="GO" id="GO:0005524">
    <property type="term" value="F:ATP binding"/>
    <property type="evidence" value="ECO:0007669"/>
    <property type="project" value="InterPro"/>
</dbReference>
<dbReference type="GO" id="GO:0046872">
    <property type="term" value="F:metal ion binding"/>
    <property type="evidence" value="ECO:0007669"/>
    <property type="project" value="TreeGrafter"/>
</dbReference>
<dbReference type="GO" id="GO:0044183">
    <property type="term" value="F:protein folding chaperone"/>
    <property type="evidence" value="ECO:0007669"/>
    <property type="project" value="InterPro"/>
</dbReference>
<dbReference type="GO" id="GO:0051087">
    <property type="term" value="F:protein-folding chaperone binding"/>
    <property type="evidence" value="ECO:0007669"/>
    <property type="project" value="TreeGrafter"/>
</dbReference>
<dbReference type="GO" id="GO:0051082">
    <property type="term" value="F:unfolded protein binding"/>
    <property type="evidence" value="ECO:0007669"/>
    <property type="project" value="TreeGrafter"/>
</dbReference>
<dbReference type="GO" id="GO:0051085">
    <property type="term" value="P:chaperone cofactor-dependent protein refolding"/>
    <property type="evidence" value="ECO:0007669"/>
    <property type="project" value="TreeGrafter"/>
</dbReference>
<dbReference type="CDD" id="cd00320">
    <property type="entry name" value="cpn10"/>
    <property type="match status" value="1"/>
</dbReference>
<dbReference type="FunFam" id="2.30.33.40:FF:000001">
    <property type="entry name" value="10 kDa chaperonin"/>
    <property type="match status" value="1"/>
</dbReference>
<dbReference type="Gene3D" id="2.30.33.40">
    <property type="entry name" value="GroES chaperonin"/>
    <property type="match status" value="1"/>
</dbReference>
<dbReference type="HAMAP" id="MF_00580">
    <property type="entry name" value="CH10"/>
    <property type="match status" value="1"/>
</dbReference>
<dbReference type="InterPro" id="IPR020818">
    <property type="entry name" value="Chaperonin_GroES"/>
</dbReference>
<dbReference type="InterPro" id="IPR037124">
    <property type="entry name" value="Chaperonin_GroES_sf"/>
</dbReference>
<dbReference type="InterPro" id="IPR018369">
    <property type="entry name" value="Chaprnonin_Cpn10_CS"/>
</dbReference>
<dbReference type="InterPro" id="IPR011032">
    <property type="entry name" value="GroES-like_sf"/>
</dbReference>
<dbReference type="NCBIfam" id="NF001526">
    <property type="entry name" value="PRK00364.1-1"/>
    <property type="match status" value="1"/>
</dbReference>
<dbReference type="NCBIfam" id="NF001527">
    <property type="entry name" value="PRK00364.1-2"/>
    <property type="match status" value="1"/>
</dbReference>
<dbReference type="NCBIfam" id="NF001531">
    <property type="entry name" value="PRK00364.2-2"/>
    <property type="match status" value="1"/>
</dbReference>
<dbReference type="PANTHER" id="PTHR10772">
    <property type="entry name" value="10 KDA HEAT SHOCK PROTEIN"/>
    <property type="match status" value="1"/>
</dbReference>
<dbReference type="PANTHER" id="PTHR10772:SF58">
    <property type="entry name" value="CO-CHAPERONIN GROES"/>
    <property type="match status" value="1"/>
</dbReference>
<dbReference type="Pfam" id="PF00166">
    <property type="entry name" value="Cpn10"/>
    <property type="match status" value="1"/>
</dbReference>
<dbReference type="PRINTS" id="PR00297">
    <property type="entry name" value="CHAPERONIN10"/>
</dbReference>
<dbReference type="SMART" id="SM00883">
    <property type="entry name" value="Cpn10"/>
    <property type="match status" value="1"/>
</dbReference>
<dbReference type="SUPFAM" id="SSF50129">
    <property type="entry name" value="GroES-like"/>
    <property type="match status" value="1"/>
</dbReference>
<dbReference type="PROSITE" id="PS00681">
    <property type="entry name" value="CHAPERONINS_CPN10"/>
    <property type="match status" value="1"/>
</dbReference>
<accession>Q1CED3</accession>
<accession>C4GY35</accession>
<organism>
    <name type="scientific">Yersinia pestis bv. Antiqua (strain Nepal516)</name>
    <dbReference type="NCBI Taxonomy" id="377628"/>
    <lineage>
        <taxon>Bacteria</taxon>
        <taxon>Pseudomonadati</taxon>
        <taxon>Pseudomonadota</taxon>
        <taxon>Gammaproteobacteria</taxon>
        <taxon>Enterobacterales</taxon>
        <taxon>Yersiniaceae</taxon>
        <taxon>Yersinia</taxon>
    </lineage>
</organism>
<sequence length="97" mass="10357">MKIRPLHDRVIVKRKEVESKSAGGIVLTGTAAGKSTRGEVLAVGNGRILDNGEIKPLDVKVGDVVIFNDGYGVKAEKIDNEEVLIMSESDILAIVEA</sequence>
<proteinExistence type="inferred from homology"/>
<keyword id="KW-0143">Chaperone</keyword>
<keyword id="KW-0963">Cytoplasm</keyword>
<evidence type="ECO:0000255" key="1">
    <source>
        <dbReference type="HAMAP-Rule" id="MF_00580"/>
    </source>
</evidence>
<name>CH10_YERPN</name>
<gene>
    <name evidence="1" type="primary">groES</name>
    <name evidence="1" type="synonym">groS</name>
    <name type="ordered locus">YPN_3320</name>
    <name type="ORF">YP516_3773</name>
</gene>